<dbReference type="EMBL" id="AF207834">
    <property type="protein sequence ID" value="AAL26779.1"/>
    <property type="molecule type" value="mRNA"/>
</dbReference>
<dbReference type="RefSeq" id="NP_001032421.1">
    <property type="nucleotide sequence ID" value="NM_001037344.1"/>
</dbReference>
<dbReference type="SMR" id="Q95LI0"/>
<dbReference type="STRING" id="9544.ENSMMUP00000067470"/>
<dbReference type="PaxDb" id="9544-ENSMMUP00000011538"/>
<dbReference type="Ensembl" id="ENSMMUT00000096383.1">
    <property type="protein sequence ID" value="ENSMMUP00000067470.1"/>
    <property type="gene ID" value="ENSMMUG00000063307.1"/>
</dbReference>
<dbReference type="GeneID" id="641438"/>
<dbReference type="KEGG" id="mcc:641438"/>
<dbReference type="CTD" id="117285"/>
<dbReference type="VEuPathDB" id="HostDB:ENSMMUG00000063307"/>
<dbReference type="eggNOG" id="ENOG502TM86">
    <property type="taxonomic scope" value="Eukaryota"/>
</dbReference>
<dbReference type="GeneTree" id="ENSGT00530000064565"/>
<dbReference type="HOGENOM" id="CLU_164142_0_0_1"/>
<dbReference type="InParanoid" id="Q95LI0"/>
<dbReference type="OMA" id="CWNKSGH"/>
<dbReference type="OrthoDB" id="9626530at2759"/>
<dbReference type="TreeFam" id="TF336381"/>
<dbReference type="Proteomes" id="UP000006718">
    <property type="component" value="Chromosome 10"/>
</dbReference>
<dbReference type="GO" id="GO:0005576">
    <property type="term" value="C:extracellular region"/>
    <property type="evidence" value="ECO:0007669"/>
    <property type="project" value="UniProtKB-SubCell"/>
</dbReference>
<dbReference type="GO" id="GO:0001530">
    <property type="term" value="F:lipopolysaccharide binding"/>
    <property type="evidence" value="ECO:0000250"/>
    <property type="project" value="UniProtKB"/>
</dbReference>
<dbReference type="GO" id="GO:0140912">
    <property type="term" value="F:membrane destabilizing activity"/>
    <property type="evidence" value="ECO:0007669"/>
    <property type="project" value="Ensembl"/>
</dbReference>
<dbReference type="GO" id="GO:0061844">
    <property type="term" value="P:antimicrobial humoral immune response mediated by antimicrobial peptide"/>
    <property type="evidence" value="ECO:0007669"/>
    <property type="project" value="Ensembl"/>
</dbReference>
<dbReference type="GO" id="GO:0007160">
    <property type="term" value="P:cell-matrix adhesion"/>
    <property type="evidence" value="ECO:0000303"/>
    <property type="project" value="UniProtKB"/>
</dbReference>
<dbReference type="GO" id="GO:0042742">
    <property type="term" value="P:defense response to bacterium"/>
    <property type="evidence" value="ECO:0000304"/>
    <property type="project" value="UniProtKB"/>
</dbReference>
<dbReference type="GO" id="GO:0050829">
    <property type="term" value="P:defense response to Gram-negative bacterium"/>
    <property type="evidence" value="ECO:0000250"/>
    <property type="project" value="UniProtKB"/>
</dbReference>
<dbReference type="GO" id="GO:0050830">
    <property type="term" value="P:defense response to Gram-positive bacterium"/>
    <property type="evidence" value="ECO:0000250"/>
    <property type="project" value="UniProtKB"/>
</dbReference>
<dbReference type="GO" id="GO:0045087">
    <property type="term" value="P:innate immune response"/>
    <property type="evidence" value="ECO:0000250"/>
    <property type="project" value="UniProtKB"/>
</dbReference>
<dbReference type="GO" id="GO:0031640">
    <property type="term" value="P:killing of cells of another organism"/>
    <property type="evidence" value="ECO:0000250"/>
    <property type="project" value="UniProtKB"/>
</dbReference>
<dbReference type="GO" id="GO:0007162">
    <property type="term" value="P:negative regulation of cell adhesion"/>
    <property type="evidence" value="ECO:0000250"/>
    <property type="project" value="UniProtKB"/>
</dbReference>
<dbReference type="GO" id="GO:0031665">
    <property type="term" value="P:negative regulation of lipopolysaccharide-mediated signaling pathway"/>
    <property type="evidence" value="ECO:0000250"/>
    <property type="project" value="UniProtKB"/>
</dbReference>
<dbReference type="GO" id="GO:0007283">
    <property type="term" value="P:spermatogenesis"/>
    <property type="evidence" value="ECO:0000303"/>
    <property type="project" value="UniProtKB"/>
</dbReference>
<dbReference type="InterPro" id="IPR050544">
    <property type="entry name" value="Beta-defensin"/>
</dbReference>
<dbReference type="InterPro" id="IPR025933">
    <property type="entry name" value="Beta_defensin_dom"/>
</dbReference>
<dbReference type="PANTHER" id="PTHR15001">
    <property type="entry name" value="BETA-DEFENSIN 123-RELATED"/>
    <property type="match status" value="1"/>
</dbReference>
<dbReference type="PANTHER" id="PTHR15001:SF7">
    <property type="entry name" value="DEFENSIN BETA 118"/>
    <property type="match status" value="1"/>
</dbReference>
<dbReference type="Pfam" id="PF13841">
    <property type="entry name" value="Defensin_beta_2"/>
    <property type="match status" value="1"/>
</dbReference>
<comment type="function">
    <text evidence="2">Host defense peptide that exhibits antimicrobial activity against both Gram-negative bacteria, such as E.coli and S.typhimurium, and Gram-positive bacteria, such as S.aureus and B.subtilis (By similarity). Inhibits cell adhesion of E.coli on intestinal epithelial enterocytes (By similarity). Causes rapid permeabilization of both the outer and inner membrane of E.coli, leading to morphological alterations on the bacterial surface (By similarity). Binds to bacterial lipopolysaccharides (LPS) with high affinity, and may thereby be involved in immunoregulation through LPS neutralization (By similarity). May contribute to epididymal innate immunity and protect the sperm against attack by microorganisms (By similarity).</text>
</comment>
<comment type="subcellular location">
    <subcellularLocation>
        <location evidence="5">Secreted</location>
    </subcellularLocation>
</comment>
<comment type="tissue specificity">
    <text evidence="5">High-level and epididymis-specific expression. Most abundant in the epithelium of the caput and is also present in the lumen and bound to sperm.</text>
</comment>
<comment type="PTM">
    <text evidence="2">The three-dimensional structure formed by the three intramolecular disulfide bridges is indispensable for antimicrobial activity.</text>
</comment>
<comment type="similarity">
    <text evidence="6">Belongs to the beta-defensin family.</text>
</comment>
<evidence type="ECO:0000250" key="1">
    <source>
        <dbReference type="UniProtKB" id="Q91V82"/>
    </source>
</evidence>
<evidence type="ECO:0000250" key="2">
    <source>
        <dbReference type="UniProtKB" id="Q96PH6"/>
    </source>
</evidence>
<evidence type="ECO:0000255" key="3"/>
<evidence type="ECO:0000256" key="4">
    <source>
        <dbReference type="SAM" id="MobiDB-lite"/>
    </source>
</evidence>
<evidence type="ECO:0000269" key="5">
    <source>
    </source>
</evidence>
<evidence type="ECO:0000305" key="6"/>
<feature type="signal peptide" evidence="3">
    <location>
        <begin position="1"/>
        <end position="19"/>
    </location>
</feature>
<feature type="peptide" id="PRO_0000006985" description="Defensin beta 118">
    <location>
        <begin position="20"/>
        <end position="62"/>
    </location>
</feature>
<feature type="propeptide" id="PRO_0000006986" evidence="3">
    <location>
        <begin position="65"/>
        <end position="123"/>
    </location>
</feature>
<feature type="region of interest" description="Disordered" evidence="4">
    <location>
        <begin position="100"/>
        <end position="123"/>
    </location>
</feature>
<feature type="compositionally biased region" description="Polar residues" evidence="4">
    <location>
        <begin position="109"/>
        <end position="123"/>
    </location>
</feature>
<feature type="disulfide bond" evidence="1">
    <location>
        <begin position="27"/>
        <end position="54"/>
    </location>
</feature>
<feature type="disulfide bond" evidence="1">
    <location>
        <begin position="34"/>
        <end position="48"/>
    </location>
</feature>
<feature type="disulfide bond" evidence="1">
    <location>
        <begin position="38"/>
        <end position="55"/>
    </location>
</feature>
<proteinExistence type="evidence at transcript level"/>
<accession>Q95LI0</accession>
<name>DB118_MACMU</name>
<sequence length="123" mass="13630">MKLLLLALPILVLLPQVIPAYGGEKKCWNRSGHCRKQCKDGEAVKETCKNHRACCVPSNEDHRRLPTTSPTPLSDSTPGIIDNILTIRFTTDYFEISSKKDMVEESEAGQGTQTSPPNVHHTS</sequence>
<protein>
    <recommendedName>
        <fullName evidence="2">Defensin beta 118</fullName>
    </recommendedName>
    <alternativeName>
        <fullName evidence="6">Beta-defensin 118</fullName>
    </alternativeName>
    <alternativeName>
        <fullName>Epididymal secretory protein 13.6</fullName>
        <shortName>ESP13.6</shortName>
    </alternativeName>
</protein>
<gene>
    <name type="primary">DEFB118</name>
    <name type="synonym">ESC42</name>
</gene>
<keyword id="KW-0044">Antibiotic</keyword>
<keyword id="KW-0929">Antimicrobial</keyword>
<keyword id="KW-0165">Cleavage on pair of basic residues</keyword>
<keyword id="KW-0211">Defensin</keyword>
<keyword id="KW-1015">Disulfide bond</keyword>
<keyword id="KW-1185">Reference proteome</keyword>
<keyword id="KW-0964">Secreted</keyword>
<keyword id="KW-0732">Signal</keyword>
<reference key="1">
    <citation type="journal article" date="2001" name="Endocrinology">
        <title>Primate epididymis-specific proteins: characterization of ESC42, a novel protein containing a trefoil-like motif in monkey and human.</title>
        <authorList>
            <person name="Liu Q."/>
            <person name="Hamil K.G."/>
            <person name="Sivashanmugam P."/>
            <person name="Grossman G."/>
            <person name="Soundararajan R."/>
            <person name="Rao A.J."/>
            <person name="Richardson R.T."/>
            <person name="Zhang Y.-L."/>
            <person name="O'Rand M.G."/>
            <person name="Petrusz P."/>
            <person name="French F.S."/>
            <person name="Hall S.H."/>
        </authorList>
    </citation>
    <scope>NUCLEOTIDE SEQUENCE [MRNA]</scope>
    <scope>SUBCELLULAR LOCATION</scope>
    <scope>TISSUE SPECIFICITY</scope>
    <source>
        <tissue>Epididymis</tissue>
    </source>
</reference>
<organism>
    <name type="scientific">Macaca mulatta</name>
    <name type="common">Rhesus macaque</name>
    <dbReference type="NCBI Taxonomy" id="9544"/>
    <lineage>
        <taxon>Eukaryota</taxon>
        <taxon>Metazoa</taxon>
        <taxon>Chordata</taxon>
        <taxon>Craniata</taxon>
        <taxon>Vertebrata</taxon>
        <taxon>Euteleostomi</taxon>
        <taxon>Mammalia</taxon>
        <taxon>Eutheria</taxon>
        <taxon>Euarchontoglires</taxon>
        <taxon>Primates</taxon>
        <taxon>Haplorrhini</taxon>
        <taxon>Catarrhini</taxon>
        <taxon>Cercopithecidae</taxon>
        <taxon>Cercopithecinae</taxon>
        <taxon>Macaca</taxon>
    </lineage>
</organism>